<protein>
    <recommendedName>
        <fullName evidence="1">Sec-independent protein translocase protein TatA</fullName>
    </recommendedName>
</protein>
<gene>
    <name evidence="1" type="primary">tatA</name>
    <name type="ordered locus">A1C_05705</name>
</gene>
<name>TATA_RICAH</name>
<proteinExistence type="inferred from homology"/>
<organism>
    <name type="scientific">Rickettsia akari (strain Hartford)</name>
    <dbReference type="NCBI Taxonomy" id="293614"/>
    <lineage>
        <taxon>Bacteria</taxon>
        <taxon>Pseudomonadati</taxon>
        <taxon>Pseudomonadota</taxon>
        <taxon>Alphaproteobacteria</taxon>
        <taxon>Rickettsiales</taxon>
        <taxon>Rickettsiaceae</taxon>
        <taxon>Rickettsieae</taxon>
        <taxon>Rickettsia</taxon>
        <taxon>spotted fever group</taxon>
    </lineage>
</organism>
<sequence length="53" mass="5755">MGMSFSHLLIVLLIIFVLFGAGKLPQVMSDLAKGLKAFKNGMQDDGSDNDKNK</sequence>
<feature type="chain" id="PRO_1000197904" description="Sec-independent protein translocase protein TatA">
    <location>
        <begin position="1"/>
        <end position="53"/>
    </location>
</feature>
<feature type="transmembrane region" description="Helical" evidence="1">
    <location>
        <begin position="1"/>
        <end position="21"/>
    </location>
</feature>
<dbReference type="EMBL" id="CP000847">
    <property type="protein sequence ID" value="ABV75376.1"/>
    <property type="molecule type" value="Genomic_DNA"/>
</dbReference>
<dbReference type="RefSeq" id="WP_012150005.1">
    <property type="nucleotide sequence ID" value="NC_009881.1"/>
</dbReference>
<dbReference type="SMR" id="A8GPQ1"/>
<dbReference type="STRING" id="293614.A1C_05705"/>
<dbReference type="KEGG" id="rak:A1C_05705"/>
<dbReference type="eggNOG" id="COG1826">
    <property type="taxonomic scope" value="Bacteria"/>
</dbReference>
<dbReference type="HOGENOM" id="CLU_086034_6_2_5"/>
<dbReference type="Proteomes" id="UP000006830">
    <property type="component" value="Chromosome"/>
</dbReference>
<dbReference type="GO" id="GO:0033281">
    <property type="term" value="C:TAT protein transport complex"/>
    <property type="evidence" value="ECO:0007669"/>
    <property type="project" value="UniProtKB-UniRule"/>
</dbReference>
<dbReference type="GO" id="GO:0008320">
    <property type="term" value="F:protein transmembrane transporter activity"/>
    <property type="evidence" value="ECO:0007669"/>
    <property type="project" value="UniProtKB-UniRule"/>
</dbReference>
<dbReference type="GO" id="GO:0043953">
    <property type="term" value="P:protein transport by the Tat complex"/>
    <property type="evidence" value="ECO:0007669"/>
    <property type="project" value="UniProtKB-UniRule"/>
</dbReference>
<dbReference type="Gene3D" id="1.20.5.3310">
    <property type="match status" value="1"/>
</dbReference>
<dbReference type="HAMAP" id="MF_00236">
    <property type="entry name" value="TatA_E"/>
    <property type="match status" value="1"/>
</dbReference>
<dbReference type="InterPro" id="IPR003369">
    <property type="entry name" value="TatA/B/E"/>
</dbReference>
<dbReference type="InterPro" id="IPR006312">
    <property type="entry name" value="TatA/E"/>
</dbReference>
<dbReference type="NCBIfam" id="NF002402">
    <property type="entry name" value="PRK01470.1"/>
    <property type="match status" value="1"/>
</dbReference>
<dbReference type="NCBIfam" id="TIGR01411">
    <property type="entry name" value="tatAE"/>
    <property type="match status" value="1"/>
</dbReference>
<dbReference type="PANTHER" id="PTHR42982">
    <property type="entry name" value="SEC-INDEPENDENT PROTEIN TRANSLOCASE PROTEIN TATA"/>
    <property type="match status" value="1"/>
</dbReference>
<dbReference type="PANTHER" id="PTHR42982:SF1">
    <property type="entry name" value="SEC-INDEPENDENT PROTEIN TRANSLOCASE PROTEIN TATA"/>
    <property type="match status" value="1"/>
</dbReference>
<dbReference type="Pfam" id="PF02416">
    <property type="entry name" value="TatA_B_E"/>
    <property type="match status" value="1"/>
</dbReference>
<reference key="1">
    <citation type="submission" date="2007-09" db="EMBL/GenBank/DDBJ databases">
        <title>Complete genome sequence of Rickettsia akari.</title>
        <authorList>
            <person name="Madan A."/>
            <person name="Fahey J."/>
            <person name="Helton E."/>
            <person name="Ketteman M."/>
            <person name="Madan A."/>
            <person name="Rodrigues S."/>
            <person name="Sanchez A."/>
            <person name="Whiting M."/>
            <person name="Dasch G."/>
            <person name="Eremeeva M."/>
        </authorList>
    </citation>
    <scope>NUCLEOTIDE SEQUENCE [LARGE SCALE GENOMIC DNA]</scope>
    <source>
        <strain>Hartford</strain>
    </source>
</reference>
<evidence type="ECO:0000255" key="1">
    <source>
        <dbReference type="HAMAP-Rule" id="MF_00236"/>
    </source>
</evidence>
<keyword id="KW-0997">Cell inner membrane</keyword>
<keyword id="KW-1003">Cell membrane</keyword>
<keyword id="KW-0472">Membrane</keyword>
<keyword id="KW-0653">Protein transport</keyword>
<keyword id="KW-0811">Translocation</keyword>
<keyword id="KW-0812">Transmembrane</keyword>
<keyword id="KW-1133">Transmembrane helix</keyword>
<keyword id="KW-0813">Transport</keyword>
<comment type="function">
    <text evidence="1">Part of the twin-arginine translocation (Tat) system that transports large folded proteins containing a characteristic twin-arginine motif in their signal peptide across membranes. TatA could form the protein-conducting channel of the Tat system.</text>
</comment>
<comment type="subunit">
    <text evidence="1">The Tat system comprises two distinct complexes: a TatABC complex, containing multiple copies of TatA, TatB and TatC subunits, and a separate TatA complex, containing only TatA subunits. Substrates initially bind to the TatABC complex, which probably triggers association of the separate TatA complex to form the active translocon.</text>
</comment>
<comment type="subcellular location">
    <subcellularLocation>
        <location evidence="1">Cell inner membrane</location>
        <topology evidence="1">Single-pass membrane protein</topology>
    </subcellularLocation>
</comment>
<comment type="similarity">
    <text evidence="1">Belongs to the TatA/E family.</text>
</comment>
<accession>A8GPQ1</accession>